<name>RS14Z_CLOBM</name>
<sequence length="61" mass="7125">MARKALIEKWNKTPKHSTRAYTRCRICGRPHAVLKKYGICRICFRELAYKGEIPGCKKASW</sequence>
<gene>
    <name evidence="1" type="primary">rpsZ</name>
    <name evidence="1" type="synonym">rpsN</name>
    <name type="ordered locus">CLK_2911</name>
</gene>
<dbReference type="EMBL" id="CP000962">
    <property type="protein sequence ID" value="ACA54370.1"/>
    <property type="molecule type" value="Genomic_DNA"/>
</dbReference>
<dbReference type="RefSeq" id="WP_003357636.1">
    <property type="nucleotide sequence ID" value="NC_010520.1"/>
</dbReference>
<dbReference type="SMR" id="B1KSL2"/>
<dbReference type="KEGG" id="cbl:CLK_2911"/>
<dbReference type="HOGENOM" id="CLU_139869_3_0_9"/>
<dbReference type="GO" id="GO:0005737">
    <property type="term" value="C:cytoplasm"/>
    <property type="evidence" value="ECO:0007669"/>
    <property type="project" value="UniProtKB-ARBA"/>
</dbReference>
<dbReference type="GO" id="GO:0015935">
    <property type="term" value="C:small ribosomal subunit"/>
    <property type="evidence" value="ECO:0007669"/>
    <property type="project" value="TreeGrafter"/>
</dbReference>
<dbReference type="GO" id="GO:0019843">
    <property type="term" value="F:rRNA binding"/>
    <property type="evidence" value="ECO:0007669"/>
    <property type="project" value="UniProtKB-UniRule"/>
</dbReference>
<dbReference type="GO" id="GO:0003735">
    <property type="term" value="F:structural constituent of ribosome"/>
    <property type="evidence" value="ECO:0007669"/>
    <property type="project" value="InterPro"/>
</dbReference>
<dbReference type="GO" id="GO:0008270">
    <property type="term" value="F:zinc ion binding"/>
    <property type="evidence" value="ECO:0007669"/>
    <property type="project" value="UniProtKB-UniRule"/>
</dbReference>
<dbReference type="GO" id="GO:0006412">
    <property type="term" value="P:translation"/>
    <property type="evidence" value="ECO:0007669"/>
    <property type="project" value="UniProtKB-UniRule"/>
</dbReference>
<dbReference type="FunFam" id="4.10.830.10:FF:000001">
    <property type="entry name" value="30S ribosomal protein S14 type Z"/>
    <property type="match status" value="1"/>
</dbReference>
<dbReference type="Gene3D" id="4.10.830.10">
    <property type="entry name" value="30s Ribosomal Protein S14, Chain N"/>
    <property type="match status" value="1"/>
</dbReference>
<dbReference type="HAMAP" id="MF_01364_B">
    <property type="entry name" value="Ribosomal_uS14_2_B"/>
    <property type="match status" value="1"/>
</dbReference>
<dbReference type="InterPro" id="IPR001209">
    <property type="entry name" value="Ribosomal_uS14"/>
</dbReference>
<dbReference type="InterPro" id="IPR023053">
    <property type="entry name" value="Ribosomal_uS14_bact"/>
</dbReference>
<dbReference type="InterPro" id="IPR043140">
    <property type="entry name" value="Ribosomal_uS14_sf"/>
</dbReference>
<dbReference type="NCBIfam" id="NF005974">
    <property type="entry name" value="PRK08061.1"/>
    <property type="match status" value="1"/>
</dbReference>
<dbReference type="PANTHER" id="PTHR19836">
    <property type="entry name" value="30S RIBOSOMAL PROTEIN S14"/>
    <property type="match status" value="1"/>
</dbReference>
<dbReference type="PANTHER" id="PTHR19836:SF19">
    <property type="entry name" value="SMALL RIBOSOMAL SUBUNIT PROTEIN US14M"/>
    <property type="match status" value="1"/>
</dbReference>
<dbReference type="Pfam" id="PF00253">
    <property type="entry name" value="Ribosomal_S14"/>
    <property type="match status" value="1"/>
</dbReference>
<dbReference type="SUPFAM" id="SSF57716">
    <property type="entry name" value="Glucocorticoid receptor-like (DNA-binding domain)"/>
    <property type="match status" value="1"/>
</dbReference>
<evidence type="ECO:0000255" key="1">
    <source>
        <dbReference type="HAMAP-Rule" id="MF_01364"/>
    </source>
</evidence>
<evidence type="ECO:0000305" key="2"/>
<proteinExistence type="inferred from homology"/>
<protein>
    <recommendedName>
        <fullName evidence="1">Small ribosomal subunit protein uS14</fullName>
    </recommendedName>
    <alternativeName>
        <fullName evidence="2">30S ribosomal protein S14 type Z</fullName>
    </alternativeName>
</protein>
<comment type="function">
    <text evidence="1">Binds 16S rRNA, required for the assembly of 30S particles and may also be responsible for determining the conformation of the 16S rRNA at the A site.</text>
</comment>
<comment type="cofactor">
    <cofactor evidence="1">
        <name>Zn(2+)</name>
        <dbReference type="ChEBI" id="CHEBI:29105"/>
    </cofactor>
    <text evidence="1">Binds 1 zinc ion per subunit.</text>
</comment>
<comment type="subunit">
    <text evidence="1">Part of the 30S ribosomal subunit. Contacts proteins S3 and S10.</text>
</comment>
<comment type="similarity">
    <text evidence="1">Belongs to the universal ribosomal protein uS14 family. Zinc-binding uS14 subfamily.</text>
</comment>
<accession>B1KSL2</accession>
<keyword id="KW-0479">Metal-binding</keyword>
<keyword id="KW-0687">Ribonucleoprotein</keyword>
<keyword id="KW-0689">Ribosomal protein</keyword>
<keyword id="KW-0694">RNA-binding</keyword>
<keyword id="KW-0699">rRNA-binding</keyword>
<keyword id="KW-0862">Zinc</keyword>
<reference key="1">
    <citation type="journal article" date="2007" name="PLoS ONE">
        <title>Analysis of the neurotoxin complex genes in Clostridium botulinum A1-A4 and B1 strains: BoNT/A3, /Ba4 and /B1 clusters are located within plasmids.</title>
        <authorList>
            <person name="Smith T.J."/>
            <person name="Hill K.K."/>
            <person name="Foley B.T."/>
            <person name="Detter J.C."/>
            <person name="Munk A.C."/>
            <person name="Bruce D.C."/>
            <person name="Doggett N.A."/>
            <person name="Smith L.A."/>
            <person name="Marks J.D."/>
            <person name="Xie G."/>
            <person name="Brettin T.S."/>
        </authorList>
    </citation>
    <scope>NUCLEOTIDE SEQUENCE [LARGE SCALE GENOMIC DNA]</scope>
    <source>
        <strain>Loch Maree / Type A3</strain>
    </source>
</reference>
<organism>
    <name type="scientific">Clostridium botulinum (strain Loch Maree / Type A3)</name>
    <dbReference type="NCBI Taxonomy" id="498214"/>
    <lineage>
        <taxon>Bacteria</taxon>
        <taxon>Bacillati</taxon>
        <taxon>Bacillota</taxon>
        <taxon>Clostridia</taxon>
        <taxon>Eubacteriales</taxon>
        <taxon>Clostridiaceae</taxon>
        <taxon>Clostridium</taxon>
    </lineage>
</organism>
<feature type="chain" id="PRO_1000143893" description="Small ribosomal subunit protein uS14">
    <location>
        <begin position="1"/>
        <end position="61"/>
    </location>
</feature>
<feature type="binding site" evidence="1">
    <location>
        <position position="24"/>
    </location>
    <ligand>
        <name>Zn(2+)</name>
        <dbReference type="ChEBI" id="CHEBI:29105"/>
    </ligand>
</feature>
<feature type="binding site" evidence="1">
    <location>
        <position position="27"/>
    </location>
    <ligand>
        <name>Zn(2+)</name>
        <dbReference type="ChEBI" id="CHEBI:29105"/>
    </ligand>
</feature>
<feature type="binding site" evidence="1">
    <location>
        <position position="40"/>
    </location>
    <ligand>
        <name>Zn(2+)</name>
        <dbReference type="ChEBI" id="CHEBI:29105"/>
    </ligand>
</feature>
<feature type="binding site" evidence="1">
    <location>
        <position position="43"/>
    </location>
    <ligand>
        <name>Zn(2+)</name>
        <dbReference type="ChEBI" id="CHEBI:29105"/>
    </ligand>
</feature>